<comment type="similarity">
    <text evidence="1">Belongs to the bacterial ribosomal protein bL28 family.</text>
</comment>
<accession>Q1QT92</accession>
<proteinExistence type="inferred from homology"/>
<gene>
    <name evidence="1" type="primary">rpmB</name>
    <name type="ordered locus">Csal_2971</name>
</gene>
<feature type="chain" id="PRO_1000007209" description="Large ribosomal subunit protein bL28">
    <location>
        <begin position="1"/>
        <end position="78"/>
    </location>
</feature>
<feature type="region of interest" description="Disordered" evidence="2">
    <location>
        <begin position="1"/>
        <end position="24"/>
    </location>
</feature>
<protein>
    <recommendedName>
        <fullName evidence="1">Large ribosomal subunit protein bL28</fullName>
    </recommendedName>
    <alternativeName>
        <fullName evidence="3">50S ribosomal protein L28</fullName>
    </alternativeName>
</protein>
<keyword id="KW-1185">Reference proteome</keyword>
<keyword id="KW-0687">Ribonucleoprotein</keyword>
<keyword id="KW-0689">Ribosomal protein</keyword>
<reference key="1">
    <citation type="journal article" date="2011" name="Stand. Genomic Sci.">
        <title>Complete genome sequence of the halophilic and highly halotolerant Chromohalobacter salexigens type strain (1H11(T)).</title>
        <authorList>
            <person name="Copeland A."/>
            <person name="O'Connor K."/>
            <person name="Lucas S."/>
            <person name="Lapidus A."/>
            <person name="Berry K.W."/>
            <person name="Detter J.C."/>
            <person name="Del Rio T.G."/>
            <person name="Hammon N."/>
            <person name="Dalin E."/>
            <person name="Tice H."/>
            <person name="Pitluck S."/>
            <person name="Bruce D."/>
            <person name="Goodwin L."/>
            <person name="Han C."/>
            <person name="Tapia R."/>
            <person name="Saunders E."/>
            <person name="Schmutz J."/>
            <person name="Brettin T."/>
            <person name="Larimer F."/>
            <person name="Land M."/>
            <person name="Hauser L."/>
            <person name="Vargas C."/>
            <person name="Nieto J.J."/>
            <person name="Kyrpides N.C."/>
            <person name="Ivanova N."/>
            <person name="Goker M."/>
            <person name="Klenk H.P."/>
            <person name="Csonka L.N."/>
            <person name="Woyke T."/>
        </authorList>
    </citation>
    <scope>NUCLEOTIDE SEQUENCE [LARGE SCALE GENOMIC DNA]</scope>
    <source>
        <strain>ATCC BAA-138 / DSM 3043 / CIP 106854 / NCIMB 13768 / 1H11</strain>
    </source>
</reference>
<dbReference type="EMBL" id="CP000285">
    <property type="protein sequence ID" value="ABE60316.1"/>
    <property type="molecule type" value="Genomic_DNA"/>
</dbReference>
<dbReference type="RefSeq" id="WP_011508262.1">
    <property type="nucleotide sequence ID" value="NC_007963.1"/>
</dbReference>
<dbReference type="SMR" id="Q1QT92"/>
<dbReference type="STRING" id="290398.Csal_2971"/>
<dbReference type="GeneID" id="95335660"/>
<dbReference type="KEGG" id="csa:Csal_2971"/>
<dbReference type="eggNOG" id="COG0227">
    <property type="taxonomic scope" value="Bacteria"/>
</dbReference>
<dbReference type="HOGENOM" id="CLU_064548_3_1_6"/>
<dbReference type="OrthoDB" id="9805609at2"/>
<dbReference type="Proteomes" id="UP000000239">
    <property type="component" value="Chromosome"/>
</dbReference>
<dbReference type="GO" id="GO:0022625">
    <property type="term" value="C:cytosolic large ribosomal subunit"/>
    <property type="evidence" value="ECO:0007669"/>
    <property type="project" value="TreeGrafter"/>
</dbReference>
<dbReference type="GO" id="GO:0003735">
    <property type="term" value="F:structural constituent of ribosome"/>
    <property type="evidence" value="ECO:0007669"/>
    <property type="project" value="InterPro"/>
</dbReference>
<dbReference type="GO" id="GO:0006412">
    <property type="term" value="P:translation"/>
    <property type="evidence" value="ECO:0007669"/>
    <property type="project" value="UniProtKB-UniRule"/>
</dbReference>
<dbReference type="FunFam" id="2.30.170.40:FF:000001">
    <property type="entry name" value="50S ribosomal protein L28"/>
    <property type="match status" value="1"/>
</dbReference>
<dbReference type="Gene3D" id="2.30.170.40">
    <property type="entry name" value="Ribosomal protein L28/L24"/>
    <property type="match status" value="1"/>
</dbReference>
<dbReference type="HAMAP" id="MF_00373">
    <property type="entry name" value="Ribosomal_bL28"/>
    <property type="match status" value="1"/>
</dbReference>
<dbReference type="InterPro" id="IPR026569">
    <property type="entry name" value="Ribosomal_bL28"/>
</dbReference>
<dbReference type="InterPro" id="IPR034704">
    <property type="entry name" value="Ribosomal_bL28/bL31-like_sf"/>
</dbReference>
<dbReference type="InterPro" id="IPR001383">
    <property type="entry name" value="Ribosomal_bL28_bact-type"/>
</dbReference>
<dbReference type="InterPro" id="IPR037147">
    <property type="entry name" value="Ribosomal_bL28_sf"/>
</dbReference>
<dbReference type="NCBIfam" id="TIGR00009">
    <property type="entry name" value="L28"/>
    <property type="match status" value="1"/>
</dbReference>
<dbReference type="PANTHER" id="PTHR13528">
    <property type="entry name" value="39S RIBOSOMAL PROTEIN L28, MITOCHONDRIAL"/>
    <property type="match status" value="1"/>
</dbReference>
<dbReference type="PANTHER" id="PTHR13528:SF2">
    <property type="entry name" value="LARGE RIBOSOMAL SUBUNIT PROTEIN BL28M"/>
    <property type="match status" value="1"/>
</dbReference>
<dbReference type="Pfam" id="PF00830">
    <property type="entry name" value="Ribosomal_L28"/>
    <property type="match status" value="1"/>
</dbReference>
<dbReference type="SUPFAM" id="SSF143800">
    <property type="entry name" value="L28p-like"/>
    <property type="match status" value="1"/>
</dbReference>
<organism>
    <name type="scientific">Chromohalobacter salexigens (strain ATCC BAA-138 / DSM 3043 / CIP 106854 / NCIMB 13768 / 1H11)</name>
    <dbReference type="NCBI Taxonomy" id="290398"/>
    <lineage>
        <taxon>Bacteria</taxon>
        <taxon>Pseudomonadati</taxon>
        <taxon>Pseudomonadota</taxon>
        <taxon>Gammaproteobacteria</taxon>
        <taxon>Oceanospirillales</taxon>
        <taxon>Halomonadaceae</taxon>
        <taxon>Chromohalobacter</taxon>
    </lineage>
</organism>
<sequence length="78" mass="9158">MSQVCQVTGKRPVTGNNVSHSQRKTRRRFVPNLHTHRFWVEGEKRFVKLRVSSKGMRIIDKKGIEEVLSDIRKRGDRV</sequence>
<name>RL28_CHRSD</name>
<evidence type="ECO:0000255" key="1">
    <source>
        <dbReference type="HAMAP-Rule" id="MF_00373"/>
    </source>
</evidence>
<evidence type="ECO:0000256" key="2">
    <source>
        <dbReference type="SAM" id="MobiDB-lite"/>
    </source>
</evidence>
<evidence type="ECO:0000305" key="3"/>